<name>VKOR1_RAT</name>
<evidence type="ECO:0000250" key="1">
    <source>
        <dbReference type="UniProtKB" id="Q9BQB6"/>
    </source>
</evidence>
<evidence type="ECO:0000269" key="2">
    <source>
    </source>
</evidence>
<evidence type="ECO:0000269" key="3">
    <source>
    </source>
</evidence>
<evidence type="ECO:0000269" key="4">
    <source>
    </source>
</evidence>
<evidence type="ECO:0000269" key="5">
    <source>
    </source>
</evidence>
<evidence type="ECO:0000305" key="6"/>
<organism>
    <name type="scientific">Rattus norvegicus</name>
    <name type="common">Rat</name>
    <dbReference type="NCBI Taxonomy" id="10116"/>
    <lineage>
        <taxon>Eukaryota</taxon>
        <taxon>Metazoa</taxon>
        <taxon>Chordata</taxon>
        <taxon>Craniata</taxon>
        <taxon>Vertebrata</taxon>
        <taxon>Euteleostomi</taxon>
        <taxon>Mammalia</taxon>
        <taxon>Eutheria</taxon>
        <taxon>Euarchontoglires</taxon>
        <taxon>Glires</taxon>
        <taxon>Rodentia</taxon>
        <taxon>Myomorpha</taxon>
        <taxon>Muroidea</taxon>
        <taxon>Muridae</taxon>
        <taxon>Murinae</taxon>
        <taxon>Rattus</taxon>
    </lineage>
</organism>
<feature type="chain" id="PRO_0000191670" description="Vitamin K epoxide reductase complex subunit 1">
    <location>
        <begin position="1"/>
        <end position="161"/>
    </location>
</feature>
<feature type="topological domain" description="Cytoplasmic" evidence="1">
    <location>
        <begin position="1"/>
        <end position="9"/>
    </location>
</feature>
<feature type="transmembrane region" description="Helical" evidence="1">
    <location>
        <begin position="10"/>
        <end position="29"/>
    </location>
</feature>
<feature type="topological domain" description="Lumenal" evidence="1">
    <location>
        <begin position="30"/>
        <end position="80"/>
    </location>
</feature>
<feature type="transmembrane region" description="Helical" evidence="1">
    <location>
        <begin position="81"/>
        <end position="95"/>
    </location>
</feature>
<feature type="topological domain" description="Cytoplasmic" evidence="1">
    <location>
        <begin position="96"/>
        <end position="100"/>
    </location>
</feature>
<feature type="transmembrane region" description="Helical" evidence="1">
    <location>
        <begin position="101"/>
        <end position="128"/>
    </location>
</feature>
<feature type="topological domain" description="Lumenal" evidence="1">
    <location>
        <begin position="129"/>
        <end position="131"/>
    </location>
</feature>
<feature type="transmembrane region" description="Helical" evidence="1">
    <location>
        <begin position="132"/>
        <end position="153"/>
    </location>
</feature>
<feature type="topological domain" description="Cytoplasmic" evidence="1">
    <location>
        <begin position="154"/>
        <end position="161"/>
    </location>
</feature>
<feature type="binding site" evidence="1">
    <location>
        <position position="80"/>
    </location>
    <ligand>
        <name>(S)-warfarin</name>
        <dbReference type="ChEBI" id="CHEBI:87744"/>
    </ligand>
</feature>
<feature type="binding site" evidence="1">
    <location>
        <position position="135"/>
    </location>
    <ligand>
        <name>phylloquinone</name>
        <dbReference type="ChEBI" id="CHEBI:18067"/>
    </ligand>
</feature>
<feature type="binding site" evidence="1">
    <location>
        <position position="139"/>
    </location>
    <ligand>
        <name>(S)-warfarin</name>
        <dbReference type="ChEBI" id="CHEBI:87744"/>
    </ligand>
</feature>
<feature type="binding site" evidence="1">
    <location>
        <position position="139"/>
    </location>
    <ligand>
        <name>phylloquinone</name>
        <dbReference type="ChEBI" id="CHEBI:18067"/>
    </ligand>
</feature>
<feature type="disulfide bond" description="Redox-active" evidence="1">
    <location>
        <begin position="43"/>
        <end position="51"/>
    </location>
</feature>
<feature type="disulfide bond" description="Redox-active" evidence="1">
    <location>
        <begin position="132"/>
        <end position="135"/>
    </location>
</feature>
<feature type="sequence variant" description="Identified in warfarin-resistant animals; strongly reduces enzyme activity; abolishes inhibition by warfarin." evidence="3 4">
    <original>L</original>
    <variation>Q</variation>
    <location>
        <position position="120"/>
    </location>
</feature>
<feature type="sequence variant" description="Identified in warfarin-resistant animals; moderately reduces enzyme activity; decreases inhibition by warfarin." evidence="3 4">
    <original>L</original>
    <variation>Q</variation>
    <location>
        <position position="128"/>
    </location>
</feature>
<feature type="sequence variant" description="Identified in warfarin-resistant animals; strongly reduces enzyme activity; abolishes inhibition by warfarin." evidence="3 4">
    <original>Y</original>
    <variation>C</variation>
    <location>
        <position position="139"/>
    </location>
</feature>
<feature type="sequence variant" description="Identified in warfarin-resistant animals; strongly reduces enzyme activity; abolishes inhibition by warfarin." evidence="3 4">
    <original>Y</original>
    <variation>F</variation>
    <location>
        <position position="139"/>
    </location>
</feature>
<feature type="sequence variant" description="Identified in warfarin-resistant animals; strongly reduces enzyme activity; abolishes inhibition by warfarin." evidence="3 4">
    <original>Y</original>
    <variation>S</variation>
    <location>
        <position position="139"/>
    </location>
</feature>
<feature type="mutagenesis site" description="Loss of enzyme activity." evidence="2">
    <original>C</original>
    <variation>S</variation>
    <location>
        <position position="132"/>
    </location>
</feature>
<feature type="mutagenesis site" description="Loss of enzyme activity." evidence="2">
    <original>C</original>
    <variation>S</variation>
    <location>
        <position position="135"/>
    </location>
</feature>
<dbReference type="EC" id="1.17.4.4" evidence="2 4 5"/>
<dbReference type="EMBL" id="AY423047">
    <property type="protein sequence ID" value="AAR82917.1"/>
    <property type="molecule type" value="mRNA"/>
</dbReference>
<dbReference type="RefSeq" id="NP_976080.1">
    <property type="nucleotide sequence ID" value="NM_203335.2"/>
</dbReference>
<dbReference type="SMR" id="Q6TEK4"/>
<dbReference type="FunCoup" id="Q6TEK4">
    <property type="interactions" value="172"/>
</dbReference>
<dbReference type="STRING" id="10116.ENSRNOP00000063977"/>
<dbReference type="BindingDB" id="Q6TEK4"/>
<dbReference type="ChEMBL" id="CHEMBL4105870"/>
<dbReference type="DrugCentral" id="Q6TEK4"/>
<dbReference type="GuidetoPHARMACOLOGY" id="2645"/>
<dbReference type="PhosphoSitePlus" id="Q6TEK4"/>
<dbReference type="PaxDb" id="10116-ENSRNOP00000063977"/>
<dbReference type="Ensembl" id="ENSRNOT00000073596.3">
    <property type="protein sequence ID" value="ENSRNOP00000063977.1"/>
    <property type="gene ID" value="ENSRNOG00000050828.3"/>
</dbReference>
<dbReference type="GeneID" id="309004"/>
<dbReference type="KEGG" id="rno:309004"/>
<dbReference type="UCSC" id="RGD:1303107">
    <property type="organism name" value="rat"/>
</dbReference>
<dbReference type="AGR" id="RGD:1303107"/>
<dbReference type="CTD" id="79001"/>
<dbReference type="RGD" id="1303107">
    <property type="gene designation" value="Vkorc1"/>
</dbReference>
<dbReference type="eggNOG" id="ENOG502S4E7">
    <property type="taxonomic scope" value="Eukaryota"/>
</dbReference>
<dbReference type="GeneTree" id="ENSGT00940000157421"/>
<dbReference type="HOGENOM" id="CLU_105471_0_0_1"/>
<dbReference type="InParanoid" id="Q6TEK4"/>
<dbReference type="OMA" id="YVINFAL"/>
<dbReference type="OrthoDB" id="17010at2759"/>
<dbReference type="PhylomeDB" id="Q6TEK4"/>
<dbReference type="TreeFam" id="TF328467"/>
<dbReference type="BRENDA" id="1.17.4.4">
    <property type="organism ID" value="5301"/>
</dbReference>
<dbReference type="Reactome" id="R-RNO-6806664">
    <property type="pathway name" value="Metabolism of vitamin K"/>
</dbReference>
<dbReference type="PRO" id="PR:Q6TEK4"/>
<dbReference type="Proteomes" id="UP000002494">
    <property type="component" value="Chromosome 1"/>
</dbReference>
<dbReference type="Bgee" id="ENSRNOG00000050828">
    <property type="expression patterns" value="Expressed in pancreas and 20 other cell types or tissues"/>
</dbReference>
<dbReference type="ExpressionAtlas" id="Q6TEK4">
    <property type="expression patterns" value="baseline and differential"/>
</dbReference>
<dbReference type="GO" id="GO:0005788">
    <property type="term" value="C:endoplasmic reticulum lumen"/>
    <property type="evidence" value="ECO:0000266"/>
    <property type="project" value="RGD"/>
</dbReference>
<dbReference type="GO" id="GO:0005789">
    <property type="term" value="C:endoplasmic reticulum membrane"/>
    <property type="evidence" value="ECO:0000266"/>
    <property type="project" value="RGD"/>
</dbReference>
<dbReference type="GO" id="GO:0048038">
    <property type="term" value="F:quinone binding"/>
    <property type="evidence" value="ECO:0007669"/>
    <property type="project" value="UniProtKB-KW"/>
</dbReference>
<dbReference type="GO" id="GO:0047058">
    <property type="term" value="F:vitamin-K-epoxide reductase (warfarin-insensitive) activity"/>
    <property type="evidence" value="ECO:0000314"/>
    <property type="project" value="RGD"/>
</dbReference>
<dbReference type="GO" id="GO:0047057">
    <property type="term" value="F:vitamin-K-epoxide reductase (warfarin-sensitive) activity"/>
    <property type="evidence" value="ECO:0000266"/>
    <property type="project" value="RGD"/>
</dbReference>
<dbReference type="GO" id="GO:0007596">
    <property type="term" value="P:blood coagulation"/>
    <property type="evidence" value="ECO:0000250"/>
    <property type="project" value="UniProtKB"/>
</dbReference>
<dbReference type="GO" id="GO:0060348">
    <property type="term" value="P:bone development"/>
    <property type="evidence" value="ECO:0000250"/>
    <property type="project" value="UniProtKB"/>
</dbReference>
<dbReference type="GO" id="GO:0017187">
    <property type="term" value="P:peptidyl-glutamic acid carboxylation"/>
    <property type="evidence" value="ECO:0000250"/>
    <property type="project" value="UniProtKB"/>
</dbReference>
<dbReference type="GO" id="GO:0050820">
    <property type="term" value="P:positive regulation of coagulation"/>
    <property type="evidence" value="ECO:0000266"/>
    <property type="project" value="RGD"/>
</dbReference>
<dbReference type="GO" id="GO:0030193">
    <property type="term" value="P:regulation of blood coagulation"/>
    <property type="evidence" value="ECO:0000315"/>
    <property type="project" value="RGD"/>
</dbReference>
<dbReference type="GO" id="GO:0042373">
    <property type="term" value="P:vitamin K metabolic process"/>
    <property type="evidence" value="ECO:0000250"/>
    <property type="project" value="UniProtKB"/>
</dbReference>
<dbReference type="GO" id="GO:0006805">
    <property type="term" value="P:xenobiotic metabolic process"/>
    <property type="evidence" value="ECO:0000266"/>
    <property type="project" value="RGD"/>
</dbReference>
<dbReference type="CDD" id="cd12917">
    <property type="entry name" value="VKOR_euk"/>
    <property type="match status" value="1"/>
</dbReference>
<dbReference type="FunFam" id="1.20.1440.130:FF:000001">
    <property type="entry name" value="Vitamin K epoxide reductase complex subunit 1-like 1"/>
    <property type="match status" value="1"/>
</dbReference>
<dbReference type="Gene3D" id="1.20.1440.130">
    <property type="entry name" value="VKOR domain"/>
    <property type="match status" value="1"/>
</dbReference>
<dbReference type="InterPro" id="IPR012932">
    <property type="entry name" value="VKOR"/>
</dbReference>
<dbReference type="InterPro" id="IPR038354">
    <property type="entry name" value="VKOR_sf"/>
</dbReference>
<dbReference type="InterPro" id="IPR042406">
    <property type="entry name" value="VKORC1/VKORC1L1"/>
</dbReference>
<dbReference type="PANTHER" id="PTHR14519:SF8">
    <property type="entry name" value="VITAMIN K EPOXIDE REDUCTASE COMPLEX SUBUNIT 1"/>
    <property type="match status" value="1"/>
</dbReference>
<dbReference type="PANTHER" id="PTHR14519">
    <property type="entry name" value="VITAMIN K EPOXIDE REDUCTASE COMPLEX, SUBUNIT 1"/>
    <property type="match status" value="1"/>
</dbReference>
<dbReference type="Pfam" id="PF07884">
    <property type="entry name" value="VKOR"/>
    <property type="match status" value="1"/>
</dbReference>
<dbReference type="SMART" id="SM00756">
    <property type="entry name" value="VKc"/>
    <property type="match status" value="1"/>
</dbReference>
<comment type="function">
    <text evidence="2 3 4 5">Involved in vitamin K metabolism. Catalytic subunit of the vitamin K epoxide reductase (VKOR) complex which reduces inactive vitamin K 2,3-epoxide to active vitamin K. Vitamin K is required for the gamma-carboxylation of various proteins, including clotting factors, and is required for normal blood coagulation, but also for normal bone development.</text>
</comment>
<comment type="catalytic activity">
    <reaction evidence="2 4 5">
        <text>phylloquinone + [protein]-disulfide + H2O = 2,3-epoxyphylloquinone + [protein]-dithiol</text>
        <dbReference type="Rhea" id="RHEA:13817"/>
        <dbReference type="Rhea" id="RHEA-COMP:10593"/>
        <dbReference type="Rhea" id="RHEA-COMP:10594"/>
        <dbReference type="ChEBI" id="CHEBI:15377"/>
        <dbReference type="ChEBI" id="CHEBI:15759"/>
        <dbReference type="ChEBI" id="CHEBI:18067"/>
        <dbReference type="ChEBI" id="CHEBI:29950"/>
        <dbReference type="ChEBI" id="CHEBI:50058"/>
        <dbReference type="EC" id="1.17.4.4"/>
    </reaction>
    <physiologicalReaction direction="right-to-left" evidence="2 4 5">
        <dbReference type="Rhea" id="RHEA:13819"/>
    </physiologicalReaction>
</comment>
<comment type="catalytic activity">
    <reaction evidence="2 4 5">
        <text>phylloquinol + [protein]-disulfide = phylloquinone + [protein]-dithiol</text>
        <dbReference type="Rhea" id="RHEA:57744"/>
        <dbReference type="Rhea" id="RHEA-COMP:10593"/>
        <dbReference type="Rhea" id="RHEA-COMP:10594"/>
        <dbReference type="ChEBI" id="CHEBI:18067"/>
        <dbReference type="ChEBI" id="CHEBI:28433"/>
        <dbReference type="ChEBI" id="CHEBI:29950"/>
        <dbReference type="ChEBI" id="CHEBI:50058"/>
        <dbReference type="EC" id="1.17.4.4"/>
    </reaction>
    <physiologicalReaction direction="right-to-left" evidence="2 4 5">
        <dbReference type="Rhea" id="RHEA:57746"/>
    </physiologicalReaction>
</comment>
<comment type="activity regulation">
    <text evidence="1 3 4 5">Inhibited by warfarin (coumadin) (PubMed:15879509, PubMed:23772386, PubMed:23928358). Warfarin locks VKORC1 in both redox states into the closed conformation (By similarity).</text>
</comment>
<comment type="subcellular location">
    <subcellularLocation>
        <location evidence="4 5">Endoplasmic reticulum membrane</location>
        <topology evidence="4 5">Multi-pass membrane protein</topology>
    </subcellularLocation>
</comment>
<comment type="tissue specificity">
    <text evidence="5">Highly expressed in liver. Detected at lower levels in lung, kidney and testis.</text>
</comment>
<comment type="domain">
    <text evidence="1">Partially oxidized VKORC1 forms a cysteine adduct with substrates, vitamin K 2,3-epoxide, inducing a closed conformation, juxtaposing all cysteines (S-S or SH) for unimpeded electron transfer. VKOR becomes fully oxidized with an open conformation that releases reaction products, vitamin K quinone, or hydroquinone. Cys-132 and Cys-135 constitute the catalytic redox-active center. Cys-43 and Cys-51 are the cysteine pair that mediates transfer of reducing equivalents during catalysis.</text>
</comment>
<comment type="similarity">
    <text evidence="6">Belongs to the VKOR family.</text>
</comment>
<reference key="1">
    <citation type="journal article" date="2004" name="Nature">
        <title>Mutations in VKORC1 cause warfarin resistance and multiple coagulation factor deficiency type 2.</title>
        <authorList>
            <person name="Rost S."/>
            <person name="Fregin A."/>
            <person name="Ivaskevicius V."/>
            <person name="Conzelmann E."/>
            <person name="Hoertnagel K."/>
            <person name="Pelz H.-J."/>
            <person name="Lappegard K."/>
            <person name="Seifried E."/>
            <person name="Scharrer I."/>
            <person name="Tuddenham E.G.D."/>
            <person name="Mueller C.R."/>
            <person name="Strom T.M."/>
            <person name="Oldenburg J."/>
        </authorList>
    </citation>
    <scope>NUCLEOTIDE SEQUENCE [MRNA]</scope>
    <source>
        <strain>Sprague-Dawley</strain>
        <tissue>Liver</tissue>
    </source>
</reference>
<reference key="2">
    <citation type="journal article" date="2004" name="Nature">
        <title>Identification of the gene for vitamin K epoxide reductase.</title>
        <authorList>
            <person name="Li T."/>
            <person name="Chang C.-Y."/>
            <person name="Jin D.-Y."/>
            <person name="Lin P.-J."/>
            <person name="Khvorova A."/>
            <person name="Stafford D.W."/>
        </authorList>
    </citation>
    <scope>IDENTIFICATION</scope>
</reference>
<reference key="3">
    <citation type="journal article" date="2005" name="J. Biol. Chem.">
        <title>Engineering of a recombinant vitamin K-dependent (gamma)-carboxylation system with enhanced (gamma)-carboxyglutamic acid forming capacity: evidence for a functional CxxC redox center in the system.</title>
        <authorList>
            <person name="Wajih N."/>
            <person name="Sane D.C."/>
            <person name="Hutson S.M."/>
            <person name="Wallin R."/>
        </authorList>
    </citation>
    <scope>MUTAGENESIS OF CYS-132 AND CYS-135</scope>
    <scope>FUNCTION</scope>
    <scope>CATALYTIC ACTIVITY</scope>
</reference>
<reference key="4">
    <citation type="journal article" date="2013" name="FEBS Open Bio">
        <title>New insights into the catalytic mechanism of vitamin K epoxide reductase (VKORC1) - The catalytic properties of the major mutations of rVKORC1 explain the biological cost associated to mutations.</title>
        <authorList>
            <person name="Matagrin B."/>
            <person name="Hodroge A."/>
            <person name="Montagut-Romans A."/>
            <person name="Andru J."/>
            <person name="Fourel I."/>
            <person name="Besse S."/>
            <person name="Benoit E."/>
            <person name="Lattard V."/>
        </authorList>
    </citation>
    <scope>FUNCTION</scope>
    <scope>CATALYTIC ACTIVITY</scope>
    <scope>ACTIVITY REGULATION</scope>
    <scope>SUBCELLULAR LOCATION</scope>
    <scope>CHARACTERIZATION OF VARIANTS GLN-120; GLN-128; CYS-139; PHE-139 AND SER-139</scope>
</reference>
<reference key="5">
    <citation type="journal article" date="2013" name="J. Biol. Chem.">
        <title>VKORC1L1, an enzyme rescuing the vitamin K 2,3-epoxide reductase activity in some extrahepatic tissues during anticoagulation therapy.</title>
        <authorList>
            <person name="Hammed A."/>
            <person name="Matagrin B."/>
            <person name="Spohn G."/>
            <person name="Prouillac C."/>
            <person name="Benoit E."/>
            <person name="Lattard V."/>
        </authorList>
    </citation>
    <scope>TISSUE SPECIFICITY</scope>
    <scope>CATALYTIC ACTIVITY</scope>
    <scope>ACTIVITY REGULATION</scope>
    <scope>SUBCELLULAR LOCATION</scope>
    <scope>FUNCTION</scope>
</reference>
<reference key="6">
    <citation type="journal article" date="2005" name="Genetics">
        <title>The genetic basis of resistance to anticoagulants in rodents.</title>
        <authorList>
            <person name="Pelz H.J."/>
            <person name="Rost S."/>
            <person name="Hunerberg M."/>
            <person name="Fregin A."/>
            <person name="Heiberg A.C."/>
            <person name="Baert K."/>
            <person name="MacNicoll A.D."/>
            <person name="Prescott C.V."/>
            <person name="Walker A.S."/>
            <person name="Oldenburg J."/>
            <person name="Muller C.R."/>
        </authorList>
    </citation>
    <scope>VARIANTS GLN-120; GLN-128; CYS-139; PHE-139 AND SER-139</scope>
    <scope>ACTIVITY REGULATION</scope>
    <scope>FUNCTION</scope>
</reference>
<keyword id="KW-1015">Disulfide bond</keyword>
<keyword id="KW-0256">Endoplasmic reticulum</keyword>
<keyword id="KW-0472">Membrane</keyword>
<keyword id="KW-0560">Oxidoreductase</keyword>
<keyword id="KW-0874">Quinone</keyword>
<keyword id="KW-0676">Redox-active center</keyword>
<keyword id="KW-1185">Reference proteome</keyword>
<keyword id="KW-0812">Transmembrane</keyword>
<keyword id="KW-1133">Transmembrane helix</keyword>
<sequence>MGTTWRSPGRLRLALCLAGLALSLYALHVKAARARNEDYRALCDVGTAISCSRVFSSRWGRGFGLVEHVLGADSILNQSNSIFGCMFYTIQLLLGCLRGRWASILLILSSLVSVAGSLYLAWILFFVLYDFCIVCITTYAINAGLMLLSFQKVPEHKVKKP</sequence>
<proteinExistence type="evidence at protein level"/>
<gene>
    <name type="primary">Vkorc1</name>
</gene>
<accession>Q6TEK4</accession>
<protein>
    <recommendedName>
        <fullName>Vitamin K epoxide reductase complex subunit 1</fullName>
        <ecNumber evidence="2 4 5">1.17.4.4</ecNumber>
    </recommendedName>
    <alternativeName>
        <fullName>Vitamin K1 2,3-epoxide reductase subunit 1</fullName>
    </alternativeName>
</protein>